<proteinExistence type="inferred from homology"/>
<accession>A1W2T4</accession>
<keyword id="KW-0066">ATP synthesis</keyword>
<keyword id="KW-0997">Cell inner membrane</keyword>
<keyword id="KW-1003">Cell membrane</keyword>
<keyword id="KW-0139">CF(1)</keyword>
<keyword id="KW-0375">Hydrogen ion transport</keyword>
<keyword id="KW-0406">Ion transport</keyword>
<keyword id="KW-0472">Membrane</keyword>
<keyword id="KW-0813">Transport</keyword>
<name>ATPD_ACISJ</name>
<dbReference type="EMBL" id="CP000539">
    <property type="protein sequence ID" value="ABM40559.1"/>
    <property type="molecule type" value="Genomic_DNA"/>
</dbReference>
<dbReference type="SMR" id="A1W2T4"/>
<dbReference type="STRING" id="232721.Ajs_0305"/>
<dbReference type="KEGG" id="ajs:Ajs_0305"/>
<dbReference type="eggNOG" id="COG0712">
    <property type="taxonomic scope" value="Bacteria"/>
</dbReference>
<dbReference type="HOGENOM" id="CLU_085114_3_0_4"/>
<dbReference type="Proteomes" id="UP000000645">
    <property type="component" value="Chromosome"/>
</dbReference>
<dbReference type="GO" id="GO:0005886">
    <property type="term" value="C:plasma membrane"/>
    <property type="evidence" value="ECO:0007669"/>
    <property type="project" value="UniProtKB-SubCell"/>
</dbReference>
<dbReference type="GO" id="GO:0045259">
    <property type="term" value="C:proton-transporting ATP synthase complex"/>
    <property type="evidence" value="ECO:0007669"/>
    <property type="project" value="UniProtKB-KW"/>
</dbReference>
<dbReference type="GO" id="GO:0046933">
    <property type="term" value="F:proton-transporting ATP synthase activity, rotational mechanism"/>
    <property type="evidence" value="ECO:0007669"/>
    <property type="project" value="UniProtKB-UniRule"/>
</dbReference>
<dbReference type="Gene3D" id="1.10.520.20">
    <property type="entry name" value="N-terminal domain of the delta subunit of the F1F0-ATP synthase"/>
    <property type="match status" value="1"/>
</dbReference>
<dbReference type="HAMAP" id="MF_01416">
    <property type="entry name" value="ATP_synth_delta_bact"/>
    <property type="match status" value="1"/>
</dbReference>
<dbReference type="InterPro" id="IPR026015">
    <property type="entry name" value="ATP_synth_OSCP/delta_N_sf"/>
</dbReference>
<dbReference type="InterPro" id="IPR000711">
    <property type="entry name" value="ATPase_OSCP/dsu"/>
</dbReference>
<dbReference type="NCBIfam" id="TIGR01145">
    <property type="entry name" value="ATP_synt_delta"/>
    <property type="match status" value="1"/>
</dbReference>
<dbReference type="NCBIfam" id="NF004402">
    <property type="entry name" value="PRK05758.2-2"/>
    <property type="match status" value="1"/>
</dbReference>
<dbReference type="PANTHER" id="PTHR11910">
    <property type="entry name" value="ATP SYNTHASE DELTA CHAIN"/>
    <property type="match status" value="1"/>
</dbReference>
<dbReference type="Pfam" id="PF00213">
    <property type="entry name" value="OSCP"/>
    <property type="match status" value="1"/>
</dbReference>
<dbReference type="PRINTS" id="PR00125">
    <property type="entry name" value="ATPASEDELTA"/>
</dbReference>
<dbReference type="SUPFAM" id="SSF47928">
    <property type="entry name" value="N-terminal domain of the delta subunit of the F1F0-ATP synthase"/>
    <property type="match status" value="1"/>
</dbReference>
<evidence type="ECO:0000255" key="1">
    <source>
        <dbReference type="HAMAP-Rule" id="MF_01416"/>
    </source>
</evidence>
<sequence>MAELATIARPYAEALYKACTDQAGVDLNGATAWVDELAAIAANPQLRQLADNPKVTGEQVFDVIVGVARSALPDLAKNFLRTVIDNGRVQALPEIAAQFRTLVNRSHGTSDAVVYSAFPLDAGALTDVGATLEKRFGRKLNLSVQLDETLIGGVRVVVGDEVLDTSVKARLEQMKAALTA</sequence>
<organism>
    <name type="scientific">Acidovorax sp. (strain JS42)</name>
    <dbReference type="NCBI Taxonomy" id="232721"/>
    <lineage>
        <taxon>Bacteria</taxon>
        <taxon>Pseudomonadati</taxon>
        <taxon>Pseudomonadota</taxon>
        <taxon>Betaproteobacteria</taxon>
        <taxon>Burkholderiales</taxon>
        <taxon>Comamonadaceae</taxon>
        <taxon>Acidovorax</taxon>
    </lineage>
</organism>
<protein>
    <recommendedName>
        <fullName evidence="1">ATP synthase subunit delta</fullName>
    </recommendedName>
    <alternativeName>
        <fullName evidence="1">ATP synthase F(1) sector subunit delta</fullName>
    </alternativeName>
    <alternativeName>
        <fullName evidence="1">F-type ATPase subunit delta</fullName>
        <shortName evidence="1">F-ATPase subunit delta</shortName>
    </alternativeName>
</protein>
<comment type="function">
    <text evidence="1">F(1)F(0) ATP synthase produces ATP from ADP in the presence of a proton or sodium gradient. F-type ATPases consist of two structural domains, F(1) containing the extramembraneous catalytic core and F(0) containing the membrane proton channel, linked together by a central stalk and a peripheral stalk. During catalysis, ATP synthesis in the catalytic domain of F(1) is coupled via a rotary mechanism of the central stalk subunits to proton translocation.</text>
</comment>
<comment type="function">
    <text evidence="1">This protein is part of the stalk that links CF(0) to CF(1). It either transmits conformational changes from CF(0) to CF(1) or is implicated in proton conduction.</text>
</comment>
<comment type="subunit">
    <text evidence="1">F-type ATPases have 2 components, F(1) - the catalytic core - and F(0) - the membrane proton channel. F(1) has five subunits: alpha(3), beta(3), gamma(1), delta(1), epsilon(1). F(0) has three main subunits: a(1), b(2) and c(10-14). The alpha and beta chains form an alternating ring which encloses part of the gamma chain. F(1) is attached to F(0) by a central stalk formed by the gamma and epsilon chains, while a peripheral stalk is formed by the delta and b chains.</text>
</comment>
<comment type="subcellular location">
    <subcellularLocation>
        <location evidence="1">Cell inner membrane</location>
        <topology evidence="1">Peripheral membrane protein</topology>
    </subcellularLocation>
</comment>
<comment type="similarity">
    <text evidence="1">Belongs to the ATPase delta chain family.</text>
</comment>
<gene>
    <name evidence="1" type="primary">atpH</name>
    <name type="ordered locus">Ajs_0305</name>
</gene>
<reference key="1">
    <citation type="submission" date="2006-12" db="EMBL/GenBank/DDBJ databases">
        <title>Complete sequence of chromosome 1 of Acidovorax sp. JS42.</title>
        <authorList>
            <person name="Copeland A."/>
            <person name="Lucas S."/>
            <person name="Lapidus A."/>
            <person name="Barry K."/>
            <person name="Detter J.C."/>
            <person name="Glavina del Rio T."/>
            <person name="Dalin E."/>
            <person name="Tice H."/>
            <person name="Pitluck S."/>
            <person name="Chertkov O."/>
            <person name="Brettin T."/>
            <person name="Bruce D."/>
            <person name="Han C."/>
            <person name="Tapia R."/>
            <person name="Gilna P."/>
            <person name="Schmutz J."/>
            <person name="Larimer F."/>
            <person name="Land M."/>
            <person name="Hauser L."/>
            <person name="Kyrpides N."/>
            <person name="Kim E."/>
            <person name="Stahl D."/>
            <person name="Richardson P."/>
        </authorList>
    </citation>
    <scope>NUCLEOTIDE SEQUENCE [LARGE SCALE GENOMIC DNA]</scope>
    <source>
        <strain>JS42</strain>
    </source>
</reference>
<feature type="chain" id="PRO_0000370868" description="ATP synthase subunit delta">
    <location>
        <begin position="1"/>
        <end position="180"/>
    </location>
</feature>